<organism>
    <name type="scientific">Caenorhabditis elegans</name>
    <dbReference type="NCBI Taxonomy" id="6239"/>
    <lineage>
        <taxon>Eukaryota</taxon>
        <taxon>Metazoa</taxon>
        <taxon>Ecdysozoa</taxon>
        <taxon>Nematoda</taxon>
        <taxon>Chromadorea</taxon>
        <taxon>Rhabditida</taxon>
        <taxon>Rhabditina</taxon>
        <taxon>Rhabditomorpha</taxon>
        <taxon>Rhabditoidea</taxon>
        <taxon>Rhabditidae</taxon>
        <taxon>Peloderinae</taxon>
        <taxon>Caenorhabditis</taxon>
    </lineage>
</organism>
<proteinExistence type="evidence at protein level"/>
<comment type="function">
    <text evidence="4">Probable substrate-specific adapter of an E3 ubiquitin-protein ligase complex which mediates the ubiquitination and subsequent proteasomal degradation of target proteins.</text>
</comment>
<comment type="pathway">
    <text>Protein modification; protein ubiquitination.</text>
</comment>
<comment type="subunit">
    <text evidence="4">Interacts with cul-3.</text>
</comment>
<comment type="interaction">
    <interactant intactId="EBI-313743">
        <id>Q9NF14</id>
    </interactant>
    <interactant intactId="EBI-593075">
        <id>Q17391</id>
        <label>cul-3</label>
    </interactant>
    <organismsDiffer>false</organismsDiffer>
    <experiments>2</experiments>
</comment>
<reference key="1">
    <citation type="journal article" date="1998" name="Science">
        <title>Genome sequence of the nematode C. elegans: a platform for investigating biology.</title>
        <authorList>
            <consortium name="The C. elegans sequencing consortium"/>
        </authorList>
    </citation>
    <scope>NUCLEOTIDE SEQUENCE [LARGE SCALE GENOMIC DNA]</scope>
    <source>
        <strain>Bristol N2</strain>
    </source>
</reference>
<reference key="2">
    <citation type="journal article" date="2003" name="Nature">
        <title>BTB proteins are substrate-specific adaptors in an SCF-like modular ubiquitin ligase containing CUL-3.</title>
        <authorList>
            <person name="Xu L."/>
            <person name="Wei Y."/>
            <person name="Reboul J."/>
            <person name="Vaglio P."/>
            <person name="Shin T.H."/>
            <person name="Vidal M."/>
            <person name="Elledge S.J."/>
            <person name="Harper J.W."/>
        </authorList>
    </citation>
    <scope>FUNCTION AS AN E3 UBIQUITIN-PROTEIN LIGASE</scope>
    <scope>INTERACTION WITH CUL3</scope>
</reference>
<dbReference type="EMBL" id="AL132877">
    <property type="protein sequence ID" value="CAB60850.1"/>
    <property type="molecule type" value="Genomic_DNA"/>
</dbReference>
<dbReference type="RefSeq" id="NP_493543.1">
    <property type="nucleotide sequence ID" value="NM_061142.9"/>
</dbReference>
<dbReference type="SMR" id="Q9NF14"/>
<dbReference type="BioGRID" id="38706">
    <property type="interactions" value="8"/>
</dbReference>
<dbReference type="DIP" id="DIP-25100N"/>
<dbReference type="FunCoup" id="Q9NF14">
    <property type="interactions" value="520"/>
</dbReference>
<dbReference type="IntAct" id="Q9NF14">
    <property type="interactions" value="7"/>
</dbReference>
<dbReference type="STRING" id="6239.Y105E8B.4.1"/>
<dbReference type="PaxDb" id="6239-Y105E8B.4"/>
<dbReference type="PeptideAtlas" id="Q9NF14"/>
<dbReference type="EnsemblMetazoa" id="Y105E8B.4.1">
    <property type="protein sequence ID" value="Y105E8B.4.1"/>
    <property type="gene ID" value="WBGene00013689"/>
</dbReference>
<dbReference type="GeneID" id="173321"/>
<dbReference type="KEGG" id="cel:CELE_Y105E8B.4"/>
<dbReference type="UCSC" id="Y105E8B.4">
    <property type="organism name" value="c. elegans"/>
</dbReference>
<dbReference type="AGR" id="WB:WBGene00013689"/>
<dbReference type="CTD" id="173321"/>
<dbReference type="WormBase" id="Y105E8B.4">
    <property type="protein sequence ID" value="CE24096"/>
    <property type="gene ID" value="WBGene00013689"/>
    <property type="gene designation" value="bath-40"/>
</dbReference>
<dbReference type="eggNOG" id="KOG1987">
    <property type="taxonomic scope" value="Eukaryota"/>
</dbReference>
<dbReference type="HOGENOM" id="CLU_056825_0_0_1"/>
<dbReference type="InParanoid" id="Q9NF14"/>
<dbReference type="OMA" id="HIELLPD"/>
<dbReference type="OrthoDB" id="5771911at2759"/>
<dbReference type="PhylomeDB" id="Q9NF14"/>
<dbReference type="Reactome" id="R-CEL-5632684">
    <property type="pathway name" value="Hedgehog 'on' state"/>
</dbReference>
<dbReference type="Reactome" id="R-CEL-9706019">
    <property type="pathway name" value="RHOBTB3 ATPase cycle"/>
</dbReference>
<dbReference type="UniPathway" id="UPA00143"/>
<dbReference type="PRO" id="PR:Q9NF14"/>
<dbReference type="Proteomes" id="UP000001940">
    <property type="component" value="Chromosome I"/>
</dbReference>
<dbReference type="Bgee" id="WBGene00013689">
    <property type="expression patterns" value="Expressed in adult organism and 3 other cell types or tissues"/>
</dbReference>
<dbReference type="GO" id="GO:0005737">
    <property type="term" value="C:cytoplasm"/>
    <property type="evidence" value="ECO:0000318"/>
    <property type="project" value="GO_Central"/>
</dbReference>
<dbReference type="GO" id="GO:0005634">
    <property type="term" value="C:nucleus"/>
    <property type="evidence" value="ECO:0000318"/>
    <property type="project" value="GO_Central"/>
</dbReference>
<dbReference type="GO" id="GO:0031625">
    <property type="term" value="F:ubiquitin protein ligase binding"/>
    <property type="evidence" value="ECO:0000318"/>
    <property type="project" value="GO_Central"/>
</dbReference>
<dbReference type="GO" id="GO:0043161">
    <property type="term" value="P:proteasome-mediated ubiquitin-dependent protein catabolic process"/>
    <property type="evidence" value="ECO:0000318"/>
    <property type="project" value="GO_Central"/>
</dbReference>
<dbReference type="GO" id="GO:0016567">
    <property type="term" value="P:protein ubiquitination"/>
    <property type="evidence" value="ECO:0007669"/>
    <property type="project" value="UniProtKB-UniPathway"/>
</dbReference>
<dbReference type="GO" id="GO:0030162">
    <property type="term" value="P:regulation of proteolysis"/>
    <property type="evidence" value="ECO:0000318"/>
    <property type="project" value="GO_Central"/>
</dbReference>
<dbReference type="CDD" id="cd14733">
    <property type="entry name" value="BACK"/>
    <property type="match status" value="1"/>
</dbReference>
<dbReference type="CDD" id="cd18186">
    <property type="entry name" value="BTB_POZ_ZBTB_KLHL-like"/>
    <property type="match status" value="1"/>
</dbReference>
<dbReference type="CDD" id="cd00121">
    <property type="entry name" value="MATH"/>
    <property type="match status" value="1"/>
</dbReference>
<dbReference type="Gene3D" id="1.25.40.420">
    <property type="match status" value="1"/>
</dbReference>
<dbReference type="Gene3D" id="2.60.210.10">
    <property type="entry name" value="Apoptosis, Tumor Necrosis Factor Receptor Associated Protein 2, Chain A"/>
    <property type="match status" value="1"/>
</dbReference>
<dbReference type="Gene3D" id="3.30.710.10">
    <property type="entry name" value="Potassium Channel Kv1.1, Chain A"/>
    <property type="match status" value="1"/>
</dbReference>
<dbReference type="InterPro" id="IPR000210">
    <property type="entry name" value="BTB/POZ_dom"/>
</dbReference>
<dbReference type="InterPro" id="IPR002083">
    <property type="entry name" value="MATH/TRAF_dom"/>
</dbReference>
<dbReference type="InterPro" id="IPR011333">
    <property type="entry name" value="SKP1/BTB/POZ_sf"/>
</dbReference>
<dbReference type="InterPro" id="IPR008974">
    <property type="entry name" value="TRAF-like"/>
</dbReference>
<dbReference type="PANTHER" id="PTHR24413">
    <property type="entry name" value="SPECKLE-TYPE POZ PROTEIN"/>
    <property type="match status" value="1"/>
</dbReference>
<dbReference type="Pfam" id="PF00651">
    <property type="entry name" value="BTB"/>
    <property type="match status" value="1"/>
</dbReference>
<dbReference type="Pfam" id="PF22486">
    <property type="entry name" value="MATH_2"/>
    <property type="match status" value="1"/>
</dbReference>
<dbReference type="SMART" id="SM00225">
    <property type="entry name" value="BTB"/>
    <property type="match status" value="1"/>
</dbReference>
<dbReference type="SUPFAM" id="SSF54695">
    <property type="entry name" value="POZ domain"/>
    <property type="match status" value="1"/>
</dbReference>
<dbReference type="SUPFAM" id="SSF49599">
    <property type="entry name" value="TRAF domain-like"/>
    <property type="match status" value="1"/>
</dbReference>
<dbReference type="PROSITE" id="PS50097">
    <property type="entry name" value="BTB"/>
    <property type="match status" value="1"/>
</dbReference>
<dbReference type="PROSITE" id="PS50144">
    <property type="entry name" value="MATH"/>
    <property type="match status" value="1"/>
</dbReference>
<keyword id="KW-1185">Reference proteome</keyword>
<keyword id="KW-0833">Ubl conjugation pathway</keyword>
<accession>Q9NF14</accession>
<sequence length="402" mass="45550">MSDRHLYGSDHSYLSSKPSCSSCRRQSSTSQKNECMTNPGSIVLTQRWTVCNFESLLKLSRPGSCLRSTVFKDDAVPDACWQLCLYPGGKREENANNVSLFLKMSATSPSKEVVLKAEYRFYFLDDNDEPKFSNVNVGEFHAKPPKGGHSWGLRNIPTQKVQNSIRQDKSLVISCHIELIPDASKVPCKRVPITPSIEMPFAQIPRAHVESELEMLASGDGTDMTIVAGPLDGEREQFRVHAYKLRAHSDVFQMMLSHTEMRENQEKRIEILDFSPTSVRAMVEFIYAGVIKSDIDVYQAVDVMQIAEKYQILALKMTCEQHLLDRLNVNNVLECITHAERYNTDVLYDACVDFAIHNRQHVMALTSWRNFISDEPVLASNLLEKMVKSNDNSSPPVKKPRV</sequence>
<feature type="chain" id="PRO_0000246701" description="BTB and MATH domain-containing protein 40">
    <location>
        <begin position="1"/>
        <end position="402"/>
    </location>
</feature>
<feature type="domain" description="MATH" evidence="2">
    <location>
        <begin position="43"/>
        <end position="177"/>
    </location>
</feature>
<feature type="domain" description="BTB" evidence="1">
    <location>
        <begin position="222"/>
        <end position="295"/>
    </location>
</feature>
<feature type="region of interest" description="Disordered" evidence="3">
    <location>
        <begin position="1"/>
        <end position="25"/>
    </location>
</feature>
<feature type="compositionally biased region" description="Low complexity" evidence="3">
    <location>
        <begin position="15"/>
        <end position="25"/>
    </location>
</feature>
<protein>
    <recommendedName>
        <fullName>BTB and MATH domain-containing protein 40</fullName>
    </recommendedName>
</protein>
<name>BAT40_CAEEL</name>
<gene>
    <name type="primary">bath-40</name>
    <name type="ORF">Y105E8B.4</name>
</gene>
<evidence type="ECO:0000255" key="1">
    <source>
        <dbReference type="PROSITE-ProRule" id="PRU00037"/>
    </source>
</evidence>
<evidence type="ECO:0000255" key="2">
    <source>
        <dbReference type="PROSITE-ProRule" id="PRU00129"/>
    </source>
</evidence>
<evidence type="ECO:0000256" key="3">
    <source>
        <dbReference type="SAM" id="MobiDB-lite"/>
    </source>
</evidence>
<evidence type="ECO:0000269" key="4">
    <source>
    </source>
</evidence>